<keyword id="KW-0106">Calcium</keyword>
<keyword id="KW-0903">Direct protein sequencing</keyword>
<keyword id="KW-1015">Disulfide bond</keyword>
<keyword id="KW-0378">Hydrolase</keyword>
<keyword id="KW-0442">Lipid degradation</keyword>
<keyword id="KW-0443">Lipid metabolism</keyword>
<keyword id="KW-0479">Metal-binding</keyword>
<keyword id="KW-0964">Secreted</keyword>
<keyword id="KW-0732">Signal</keyword>
<keyword id="KW-0800">Toxin</keyword>
<feature type="signal peptide" evidence="6">
    <location>
        <begin position="1"/>
        <end position="16"/>
    </location>
</feature>
<feature type="chain" id="PRO_0000161642" description="Acidic phospholipase A2 beta">
    <location>
        <begin position="17"/>
        <end position="138"/>
    </location>
</feature>
<feature type="active site" evidence="3">
    <location>
        <position position="63"/>
    </location>
</feature>
<feature type="active site" evidence="3">
    <location>
        <position position="105"/>
    </location>
</feature>
<feature type="binding site" evidence="2">
    <location>
        <position position="43"/>
    </location>
    <ligand>
        <name>Ca(2+)</name>
        <dbReference type="ChEBI" id="CHEBI:29108"/>
    </ligand>
</feature>
<feature type="binding site" evidence="2">
    <location>
        <position position="45"/>
    </location>
    <ligand>
        <name>Ca(2+)</name>
        <dbReference type="ChEBI" id="CHEBI:29108"/>
    </ligand>
</feature>
<feature type="binding site" evidence="2">
    <location>
        <position position="47"/>
    </location>
    <ligand>
        <name>Ca(2+)</name>
        <dbReference type="ChEBI" id="CHEBI:29108"/>
    </ligand>
</feature>
<feature type="binding site" evidence="2">
    <location>
        <position position="64"/>
    </location>
    <ligand>
        <name>Ca(2+)</name>
        <dbReference type="ChEBI" id="CHEBI:29108"/>
    </ligand>
</feature>
<feature type="disulfide bond" evidence="2">
    <location>
        <begin position="42"/>
        <end position="131"/>
    </location>
</feature>
<feature type="disulfide bond" evidence="2">
    <location>
        <begin position="44"/>
        <end position="60"/>
    </location>
</feature>
<feature type="disulfide bond" evidence="2">
    <location>
        <begin position="59"/>
        <end position="111"/>
    </location>
</feature>
<feature type="disulfide bond" evidence="2">
    <location>
        <begin position="65"/>
        <end position="138"/>
    </location>
</feature>
<feature type="disulfide bond" evidence="2">
    <location>
        <begin position="66"/>
        <end position="104"/>
    </location>
</feature>
<feature type="disulfide bond" evidence="2">
    <location>
        <begin position="73"/>
        <end position="97"/>
    </location>
</feature>
<feature type="disulfide bond" evidence="2">
    <location>
        <begin position="91"/>
        <end position="102"/>
    </location>
</feature>
<feature type="sequence variant" description="In the alpha form.">
    <original>E</original>
    <variation>Q</variation>
    <location>
        <position position="133"/>
    </location>
</feature>
<feature type="sequence conflict" description="In Ref. 2; AA sequence." evidence="7" ref="2">
    <original>D</original>
    <variation>N</variation>
    <location>
        <position position="72"/>
    </location>
</feature>
<feature type="sequence conflict" description="In Ref. 2; AA sequence." evidence="7" ref="2">
    <original>N</original>
    <variation>D</variation>
    <location>
        <position position="130"/>
    </location>
</feature>
<protein>
    <recommendedName>
        <fullName>Acidic phospholipase A2 beta</fullName>
        <shortName>svPLA2</shortName>
        <ecNumber>3.1.1.4</ecNumber>
    </recommendedName>
    <alternativeName>
        <fullName>Phosphatidylcholine 2-acylhydrolase</fullName>
    </alternativeName>
</protein>
<accession>P00623</accession>
<accession>F8S100</accession>
<dbReference type="EC" id="3.1.1.4"/>
<dbReference type="EMBL" id="HQ414104">
    <property type="protein sequence ID" value="AEJ31982.1"/>
    <property type="molecule type" value="mRNA"/>
</dbReference>
<dbReference type="PIR" id="A00763">
    <property type="entry name" value="PSRSAE"/>
</dbReference>
<dbReference type="SMR" id="P00623"/>
<dbReference type="BindingDB" id="P00623"/>
<dbReference type="ChEMBL" id="CHEMBL5711"/>
<dbReference type="GO" id="GO:0005576">
    <property type="term" value="C:extracellular region"/>
    <property type="evidence" value="ECO:0007669"/>
    <property type="project" value="UniProtKB-SubCell"/>
</dbReference>
<dbReference type="GO" id="GO:0005509">
    <property type="term" value="F:calcium ion binding"/>
    <property type="evidence" value="ECO:0007669"/>
    <property type="project" value="InterPro"/>
</dbReference>
<dbReference type="GO" id="GO:0047498">
    <property type="term" value="F:calcium-dependent phospholipase A2 activity"/>
    <property type="evidence" value="ECO:0007669"/>
    <property type="project" value="TreeGrafter"/>
</dbReference>
<dbReference type="GO" id="GO:0005543">
    <property type="term" value="F:phospholipid binding"/>
    <property type="evidence" value="ECO:0007669"/>
    <property type="project" value="TreeGrafter"/>
</dbReference>
<dbReference type="GO" id="GO:0090729">
    <property type="term" value="F:toxin activity"/>
    <property type="evidence" value="ECO:0007669"/>
    <property type="project" value="UniProtKB-KW"/>
</dbReference>
<dbReference type="GO" id="GO:0050482">
    <property type="term" value="P:arachidonate secretion"/>
    <property type="evidence" value="ECO:0007669"/>
    <property type="project" value="InterPro"/>
</dbReference>
<dbReference type="GO" id="GO:0016042">
    <property type="term" value="P:lipid catabolic process"/>
    <property type="evidence" value="ECO:0007669"/>
    <property type="project" value="UniProtKB-KW"/>
</dbReference>
<dbReference type="GO" id="GO:0042130">
    <property type="term" value="P:negative regulation of T cell proliferation"/>
    <property type="evidence" value="ECO:0007669"/>
    <property type="project" value="TreeGrafter"/>
</dbReference>
<dbReference type="GO" id="GO:0006644">
    <property type="term" value="P:phospholipid metabolic process"/>
    <property type="evidence" value="ECO:0007669"/>
    <property type="project" value="InterPro"/>
</dbReference>
<dbReference type="CDD" id="cd00125">
    <property type="entry name" value="PLA2c"/>
    <property type="match status" value="1"/>
</dbReference>
<dbReference type="FunFam" id="1.20.90.10:FF:000001">
    <property type="entry name" value="Basic phospholipase A2 homolog"/>
    <property type="match status" value="1"/>
</dbReference>
<dbReference type="Gene3D" id="1.20.90.10">
    <property type="entry name" value="Phospholipase A2 domain"/>
    <property type="match status" value="1"/>
</dbReference>
<dbReference type="InterPro" id="IPR001211">
    <property type="entry name" value="PLipase_A2"/>
</dbReference>
<dbReference type="InterPro" id="IPR033112">
    <property type="entry name" value="PLipase_A2_Asp_AS"/>
</dbReference>
<dbReference type="InterPro" id="IPR016090">
    <property type="entry name" value="PLipase_A2_dom"/>
</dbReference>
<dbReference type="InterPro" id="IPR036444">
    <property type="entry name" value="PLipase_A2_dom_sf"/>
</dbReference>
<dbReference type="InterPro" id="IPR033113">
    <property type="entry name" value="PLipase_A2_His_AS"/>
</dbReference>
<dbReference type="PANTHER" id="PTHR11716">
    <property type="entry name" value="PHOSPHOLIPASE A2 FAMILY MEMBER"/>
    <property type="match status" value="1"/>
</dbReference>
<dbReference type="PANTHER" id="PTHR11716:SF9">
    <property type="entry name" value="PHOSPHOLIPASE A2, MEMBRANE ASSOCIATED"/>
    <property type="match status" value="1"/>
</dbReference>
<dbReference type="Pfam" id="PF00068">
    <property type="entry name" value="Phospholip_A2_1"/>
    <property type="match status" value="1"/>
</dbReference>
<dbReference type="PRINTS" id="PR00389">
    <property type="entry name" value="PHPHLIPASEA2"/>
</dbReference>
<dbReference type="SMART" id="SM00085">
    <property type="entry name" value="PA2c"/>
    <property type="match status" value="1"/>
</dbReference>
<dbReference type="SUPFAM" id="SSF48619">
    <property type="entry name" value="Phospholipase A2, PLA2"/>
    <property type="match status" value="1"/>
</dbReference>
<dbReference type="PROSITE" id="PS00119">
    <property type="entry name" value="PA2_ASP"/>
    <property type="match status" value="1"/>
</dbReference>
<dbReference type="PROSITE" id="PS00118">
    <property type="entry name" value="PA2_HIS"/>
    <property type="match status" value="1"/>
</dbReference>
<evidence type="ECO:0000250" key="1"/>
<evidence type="ECO:0000250" key="2">
    <source>
        <dbReference type="UniProtKB" id="O42191"/>
    </source>
</evidence>
<evidence type="ECO:0000250" key="3">
    <source>
        <dbReference type="UniProtKB" id="P06859"/>
    </source>
</evidence>
<evidence type="ECO:0000255" key="4">
    <source>
        <dbReference type="PROSITE-ProRule" id="PRU10035"/>
    </source>
</evidence>
<evidence type="ECO:0000255" key="5">
    <source>
        <dbReference type="PROSITE-ProRule" id="PRU10036"/>
    </source>
</evidence>
<evidence type="ECO:0000269" key="6">
    <source>
    </source>
</evidence>
<evidence type="ECO:0000305" key="7"/>
<proteinExistence type="evidence at protein level"/>
<comment type="function">
    <text>PLA2 catalyzes the calcium-dependent hydrolysis of the 2-acyl groups in 3-sn-phosphoglycerides.</text>
</comment>
<comment type="catalytic activity">
    <reaction evidence="4 5">
        <text>a 1,2-diacyl-sn-glycero-3-phosphocholine + H2O = a 1-acyl-sn-glycero-3-phosphocholine + a fatty acid + H(+)</text>
        <dbReference type="Rhea" id="RHEA:15801"/>
        <dbReference type="ChEBI" id="CHEBI:15377"/>
        <dbReference type="ChEBI" id="CHEBI:15378"/>
        <dbReference type="ChEBI" id="CHEBI:28868"/>
        <dbReference type="ChEBI" id="CHEBI:57643"/>
        <dbReference type="ChEBI" id="CHEBI:58168"/>
        <dbReference type="EC" id="3.1.1.4"/>
    </reaction>
</comment>
<comment type="cofactor">
    <cofactor evidence="1">
        <name>Ca(2+)</name>
        <dbReference type="ChEBI" id="CHEBI:29108"/>
    </cofactor>
    <text evidence="1">Binds 1 Ca(2+) ion per subunit.</text>
</comment>
<comment type="subunit">
    <text evidence="6">Dimer.</text>
</comment>
<comment type="subcellular location">
    <subcellularLocation>
        <location>Secreted</location>
    </subcellularLocation>
</comment>
<comment type="tissue specificity">
    <text>Expressed by the venom gland.</text>
</comment>
<comment type="similarity">
    <text evidence="7">Belongs to the phospholipase A2 family. Group II subfamily. D49 sub-subfamily.</text>
</comment>
<reference key="1">
    <citation type="journal article" date="2011" name="Toxicon">
        <title>A high-throughput venom-gland transcriptome for the eastern diamondback rattlesnake (Crotalus adamanteus) and evidence for pervasive positive selection across toxin classes.</title>
        <authorList>
            <person name="Rokyta D.R."/>
            <person name="Wray K.P."/>
            <person name="Lemmon A.R."/>
            <person name="Lemmon E.M."/>
            <person name="Caudle S.B."/>
        </authorList>
    </citation>
    <scope>NUCLEOTIDE SEQUENCE [MRNA]</scope>
    <source>
        <tissue>Venom gland</tissue>
    </source>
</reference>
<reference key="2">
    <citation type="journal article" date="1977" name="J. Biol. Chem.">
        <title>Amino acid sequence of phospholipase A2-alpha from the venom of Crotalus adamanteus. A new classification of phospholipases A2 based upon structural determinants.</title>
        <authorList>
            <person name="Heinrikson R.L."/>
            <person name="Krueger E.T."/>
            <person name="Keim P.S."/>
        </authorList>
    </citation>
    <scope>PROTEIN SEQUENCE OF 17-138</scope>
    <scope>SUBUNIT</scope>
    <source>
        <tissue>Venom</tissue>
    </source>
</reference>
<name>PA2A_CROAD</name>
<sequence length="138" mass="15433">MRTLWIVAVLLLGVEGSLVQFETLIMKVAKRSGLLWYSAYGCYCGWGGHGRPQDATDRCCFVHDCCYGKATDCNPKTVSYTYSEENGEIVCGGDDPCGTQICECDKAAAICFRDNIPSYDNKYWLFPPKNCREEPEPC</sequence>
<organism>
    <name type="scientific">Crotalus adamanteus</name>
    <name type="common">Eastern diamondback rattlesnake</name>
    <dbReference type="NCBI Taxonomy" id="8729"/>
    <lineage>
        <taxon>Eukaryota</taxon>
        <taxon>Metazoa</taxon>
        <taxon>Chordata</taxon>
        <taxon>Craniata</taxon>
        <taxon>Vertebrata</taxon>
        <taxon>Euteleostomi</taxon>
        <taxon>Lepidosauria</taxon>
        <taxon>Squamata</taxon>
        <taxon>Bifurcata</taxon>
        <taxon>Unidentata</taxon>
        <taxon>Episquamata</taxon>
        <taxon>Toxicofera</taxon>
        <taxon>Serpentes</taxon>
        <taxon>Colubroidea</taxon>
        <taxon>Viperidae</taxon>
        <taxon>Crotalinae</taxon>
        <taxon>Crotalus</taxon>
    </lineage>
</organism>